<protein>
    <recommendedName>
        <fullName evidence="1">Beta-ketoacyl-[acyl-carrier-protein] synthase III 2</fullName>
        <shortName evidence="1">Beta-ketoacyl-ACP synthase III 2</shortName>
        <shortName evidence="1">KAS III 2</shortName>
        <ecNumber evidence="1">2.3.1.180</ecNumber>
    </recommendedName>
    <alternativeName>
        <fullName evidence="1">3-oxoacyl-[acyl-carrier-protein] synthase 3 2</fullName>
    </alternativeName>
    <alternativeName>
        <fullName evidence="1">3-oxoacyl-[acyl-carrier-protein] synthase III 2</fullName>
    </alternativeName>
</protein>
<comment type="function">
    <text evidence="1">Catalyzes the condensation reaction of fatty acid synthesis by the addition to an acyl acceptor of two carbons from malonyl-ACP. Catalyzes the first condensation reaction which initiates fatty acid synthesis and may therefore play a role in governing the total rate of fatty acid production. Possesses both acetoacetyl-ACP synthase and acetyl transacylase activities. Its substrate specificity determines the biosynthesis of branched-chain and/or straight-chain of fatty acids.</text>
</comment>
<comment type="catalytic activity">
    <reaction evidence="1">
        <text>malonyl-[ACP] + acetyl-CoA + H(+) = 3-oxobutanoyl-[ACP] + CO2 + CoA</text>
        <dbReference type="Rhea" id="RHEA:12080"/>
        <dbReference type="Rhea" id="RHEA-COMP:9623"/>
        <dbReference type="Rhea" id="RHEA-COMP:9625"/>
        <dbReference type="ChEBI" id="CHEBI:15378"/>
        <dbReference type="ChEBI" id="CHEBI:16526"/>
        <dbReference type="ChEBI" id="CHEBI:57287"/>
        <dbReference type="ChEBI" id="CHEBI:57288"/>
        <dbReference type="ChEBI" id="CHEBI:78449"/>
        <dbReference type="ChEBI" id="CHEBI:78450"/>
        <dbReference type="EC" id="2.3.1.180"/>
    </reaction>
</comment>
<comment type="pathway">
    <text evidence="1">Lipid metabolism; fatty acid biosynthesis.</text>
</comment>
<comment type="subunit">
    <text evidence="1">Homodimer.</text>
</comment>
<comment type="subcellular location">
    <subcellularLocation>
        <location evidence="1">Cytoplasm</location>
    </subcellularLocation>
</comment>
<comment type="domain">
    <text evidence="1">The last Arg residue of the ACP-binding site is essential for the weak association between ACP/AcpP and FabH.</text>
</comment>
<comment type="similarity">
    <text evidence="1">Belongs to the thiolase-like superfamily. FabH family.</text>
</comment>
<keyword id="KW-0012">Acyltransferase</keyword>
<keyword id="KW-0963">Cytoplasm</keyword>
<keyword id="KW-0275">Fatty acid biosynthesis</keyword>
<keyword id="KW-0276">Fatty acid metabolism</keyword>
<keyword id="KW-0444">Lipid biosynthesis</keyword>
<keyword id="KW-0443">Lipid metabolism</keyword>
<keyword id="KW-0511">Multifunctional enzyme</keyword>
<keyword id="KW-1185">Reference proteome</keyword>
<keyword id="KW-0808">Transferase</keyword>
<feature type="chain" id="PRO_0000110398" description="Beta-ketoacyl-[acyl-carrier-protein] synthase III 2">
    <location>
        <begin position="1"/>
        <end position="332"/>
    </location>
</feature>
<feature type="region of interest" description="ACP-binding" evidence="1">
    <location>
        <begin position="253"/>
        <end position="257"/>
    </location>
</feature>
<feature type="active site" evidence="1">
    <location>
        <position position="115"/>
    </location>
</feature>
<feature type="active site" evidence="1">
    <location>
        <position position="252"/>
    </location>
</feature>
<feature type="active site" evidence="1">
    <location>
        <position position="282"/>
    </location>
</feature>
<accession>Q9KET5</accession>
<dbReference type="EC" id="2.3.1.180" evidence="1"/>
<dbReference type="EMBL" id="BA000004">
    <property type="protein sequence ID" value="BAB04483.1"/>
    <property type="molecule type" value="Genomic_DNA"/>
</dbReference>
<dbReference type="PIR" id="D83745">
    <property type="entry name" value="D83745"/>
</dbReference>
<dbReference type="RefSeq" id="WP_010896937.1">
    <property type="nucleotide sequence ID" value="NC_002570.2"/>
</dbReference>
<dbReference type="SMR" id="Q9KET5"/>
<dbReference type="STRING" id="272558.gene:10726638"/>
<dbReference type="KEGG" id="bha:BH0764"/>
<dbReference type="eggNOG" id="COG0332">
    <property type="taxonomic scope" value="Bacteria"/>
</dbReference>
<dbReference type="HOGENOM" id="CLU_039592_3_1_9"/>
<dbReference type="OrthoDB" id="9815506at2"/>
<dbReference type="UniPathway" id="UPA00094"/>
<dbReference type="Proteomes" id="UP000001258">
    <property type="component" value="Chromosome"/>
</dbReference>
<dbReference type="GO" id="GO:0005737">
    <property type="term" value="C:cytoplasm"/>
    <property type="evidence" value="ECO:0007669"/>
    <property type="project" value="UniProtKB-SubCell"/>
</dbReference>
<dbReference type="GO" id="GO:0004315">
    <property type="term" value="F:3-oxoacyl-[acyl-carrier-protein] synthase activity"/>
    <property type="evidence" value="ECO:0007669"/>
    <property type="project" value="InterPro"/>
</dbReference>
<dbReference type="GO" id="GO:0033818">
    <property type="term" value="F:beta-ketoacyl-acyl-carrier-protein synthase III activity"/>
    <property type="evidence" value="ECO:0007669"/>
    <property type="project" value="UniProtKB-UniRule"/>
</dbReference>
<dbReference type="GO" id="GO:0006633">
    <property type="term" value="P:fatty acid biosynthetic process"/>
    <property type="evidence" value="ECO:0007669"/>
    <property type="project" value="UniProtKB-UniRule"/>
</dbReference>
<dbReference type="GO" id="GO:0044550">
    <property type="term" value="P:secondary metabolite biosynthetic process"/>
    <property type="evidence" value="ECO:0007669"/>
    <property type="project" value="TreeGrafter"/>
</dbReference>
<dbReference type="CDD" id="cd00830">
    <property type="entry name" value="KAS_III"/>
    <property type="match status" value="1"/>
</dbReference>
<dbReference type="FunFam" id="3.40.47.10:FF:000004">
    <property type="entry name" value="3-oxoacyl-[acyl-carrier-protein] synthase 3"/>
    <property type="match status" value="1"/>
</dbReference>
<dbReference type="Gene3D" id="3.40.47.10">
    <property type="match status" value="1"/>
</dbReference>
<dbReference type="HAMAP" id="MF_01815">
    <property type="entry name" value="FabH"/>
    <property type="match status" value="1"/>
</dbReference>
<dbReference type="InterPro" id="IPR013747">
    <property type="entry name" value="ACP_syn_III_C"/>
</dbReference>
<dbReference type="InterPro" id="IPR013751">
    <property type="entry name" value="ACP_syn_III_N"/>
</dbReference>
<dbReference type="InterPro" id="IPR004655">
    <property type="entry name" value="FabH"/>
</dbReference>
<dbReference type="InterPro" id="IPR016039">
    <property type="entry name" value="Thiolase-like"/>
</dbReference>
<dbReference type="NCBIfam" id="TIGR00747">
    <property type="entry name" value="fabH"/>
    <property type="match status" value="1"/>
</dbReference>
<dbReference type="NCBIfam" id="NF006829">
    <property type="entry name" value="PRK09352.1"/>
    <property type="match status" value="1"/>
</dbReference>
<dbReference type="PANTHER" id="PTHR34069">
    <property type="entry name" value="3-OXOACYL-[ACYL-CARRIER-PROTEIN] SYNTHASE 3"/>
    <property type="match status" value="1"/>
</dbReference>
<dbReference type="PANTHER" id="PTHR34069:SF2">
    <property type="entry name" value="BETA-KETOACYL-[ACYL-CARRIER-PROTEIN] SYNTHASE III"/>
    <property type="match status" value="1"/>
</dbReference>
<dbReference type="Pfam" id="PF08545">
    <property type="entry name" value="ACP_syn_III"/>
    <property type="match status" value="1"/>
</dbReference>
<dbReference type="Pfam" id="PF08541">
    <property type="entry name" value="ACP_syn_III_C"/>
    <property type="match status" value="1"/>
</dbReference>
<dbReference type="SUPFAM" id="SSF53901">
    <property type="entry name" value="Thiolase-like"/>
    <property type="match status" value="1"/>
</dbReference>
<evidence type="ECO:0000255" key="1">
    <source>
        <dbReference type="HAMAP-Rule" id="MF_01815"/>
    </source>
</evidence>
<sequence length="332" mass="36264">MNVSKARITAIGSYVPERRLTNDDLEKMVDTNDEWIVKRTGIRERRIAADDEFTSDIGYKAVQDLIARYEKSVDDVDMIIVCTFTPDFKTPSAASLIQAKLGIQNTGAIDLNAACAGFTYGLHMANGLISSGLHRKILVIGAETISKVTDYTDRTTCILFGDGAGAVLVEYDENEPSFVSFNLGSEGERANKLYCTGLAEQMNGEELVNTGNLVQSGREVYKWAVNTVPAGMKAVLEKAAMKRNEIDWFVPHSANLRMIESICDKSGIPLEQTLYSLVQYGNTSSATIPLALDIGVREGKLKHGDNVLLYGFGGGLAHAGLILRWTVPTEKN</sequence>
<reference key="1">
    <citation type="journal article" date="2000" name="Nucleic Acids Res.">
        <title>Complete genome sequence of the alkaliphilic bacterium Bacillus halodurans and genomic sequence comparison with Bacillus subtilis.</title>
        <authorList>
            <person name="Takami H."/>
            <person name="Nakasone K."/>
            <person name="Takaki Y."/>
            <person name="Maeno G."/>
            <person name="Sasaki R."/>
            <person name="Masui N."/>
            <person name="Fuji F."/>
            <person name="Hirama C."/>
            <person name="Nakamura Y."/>
            <person name="Ogasawara N."/>
            <person name="Kuhara S."/>
            <person name="Horikoshi K."/>
        </authorList>
    </citation>
    <scope>NUCLEOTIDE SEQUENCE [LARGE SCALE GENOMIC DNA]</scope>
    <source>
        <strain>ATCC BAA-125 / DSM 18197 / FERM 7344 / JCM 9153 / C-125</strain>
    </source>
</reference>
<proteinExistence type="inferred from homology"/>
<gene>
    <name evidence="1" type="primary">fabH2</name>
    <name type="ordered locus">BH0764</name>
</gene>
<organism>
    <name type="scientific">Halalkalibacterium halodurans (strain ATCC BAA-125 / DSM 18197 / FERM 7344 / JCM 9153 / C-125)</name>
    <name type="common">Bacillus halodurans</name>
    <dbReference type="NCBI Taxonomy" id="272558"/>
    <lineage>
        <taxon>Bacteria</taxon>
        <taxon>Bacillati</taxon>
        <taxon>Bacillota</taxon>
        <taxon>Bacilli</taxon>
        <taxon>Bacillales</taxon>
        <taxon>Bacillaceae</taxon>
        <taxon>Halalkalibacterium (ex Joshi et al. 2022)</taxon>
    </lineage>
</organism>
<name>FABH2_HALH5</name>